<evidence type="ECO:0000255" key="1"/>
<evidence type="ECO:0000305" key="2"/>
<comment type="subcellular location">
    <subcellularLocation>
        <location evidence="2">Cell membrane</location>
        <topology evidence="2">Lipid-anchor</topology>
        <topology evidence="2">GPI-anchor</topology>
    </subcellularLocation>
</comment>
<sequence>MFNRFNKFQAAVALALLSRGALGDSYTNSTSSADLSSITSVSSASASATASDSLSSSDGTVYLPSTTISGDLTVTGKVIATEAVEVAAGGKLTLLDGEKYVFSSDLKVHGDLVVEKSEASYEGTAFDVSGETFEVSGNFSAEETGAVSASIYSFTPSSFKSSGDISLSLSKAKKGEVTFSPYSNAGTFSLSNAILNGGSVSGL</sequence>
<proteinExistence type="evidence at protein level"/>
<name>YH214_YEAST</name>
<organism>
    <name type="scientific">Saccharomyces cerevisiae (strain ATCC 204508 / S288c)</name>
    <name type="common">Baker's yeast</name>
    <dbReference type="NCBI Taxonomy" id="559292"/>
    <lineage>
        <taxon>Eukaryota</taxon>
        <taxon>Fungi</taxon>
        <taxon>Dikarya</taxon>
        <taxon>Ascomycota</taxon>
        <taxon>Saccharomycotina</taxon>
        <taxon>Saccharomycetes</taxon>
        <taxon>Saccharomycetales</taxon>
        <taxon>Saccharomycetaceae</taxon>
        <taxon>Saccharomyces</taxon>
    </lineage>
</organism>
<gene>
    <name type="ordered locus">YHR214W</name>
</gene>
<reference key="1">
    <citation type="journal article" date="1994" name="Science">
        <title>Complete nucleotide sequence of Saccharomyces cerevisiae chromosome VIII.</title>
        <authorList>
            <person name="Johnston M."/>
            <person name="Andrews S."/>
            <person name="Brinkman R."/>
            <person name="Cooper J."/>
            <person name="Ding H."/>
            <person name="Dover J."/>
            <person name="Du Z."/>
            <person name="Favello A."/>
            <person name="Fulton L."/>
            <person name="Gattung S."/>
            <person name="Geisel C."/>
            <person name="Kirsten J."/>
            <person name="Kucaba T."/>
            <person name="Hillier L.W."/>
            <person name="Jier M."/>
            <person name="Johnston L."/>
            <person name="Langston Y."/>
            <person name="Latreille P."/>
            <person name="Louis E.J."/>
            <person name="Macri C."/>
            <person name="Mardis E."/>
            <person name="Menezes S."/>
            <person name="Mouser L."/>
            <person name="Nhan M."/>
            <person name="Rifkin L."/>
            <person name="Riles L."/>
            <person name="St Peter H."/>
            <person name="Trevaskis E."/>
            <person name="Vaughan K."/>
            <person name="Vignati D."/>
            <person name="Wilcox L."/>
            <person name="Wohldman P."/>
            <person name="Waterston R."/>
            <person name="Wilson R."/>
            <person name="Vaudin M."/>
        </authorList>
    </citation>
    <scope>NUCLEOTIDE SEQUENCE [LARGE SCALE GENOMIC DNA]</scope>
    <source>
        <strain>ATCC 204508 / S288c</strain>
    </source>
</reference>
<reference key="2">
    <citation type="journal article" date="2014" name="G3 (Bethesda)">
        <title>The reference genome sequence of Saccharomyces cerevisiae: Then and now.</title>
        <authorList>
            <person name="Engel S.R."/>
            <person name="Dietrich F.S."/>
            <person name="Fisk D.G."/>
            <person name="Binkley G."/>
            <person name="Balakrishnan R."/>
            <person name="Costanzo M.C."/>
            <person name="Dwight S.S."/>
            <person name="Hitz B.C."/>
            <person name="Karra K."/>
            <person name="Nash R.S."/>
            <person name="Weng S."/>
            <person name="Wong E.D."/>
            <person name="Lloyd P."/>
            <person name="Skrzypek M.S."/>
            <person name="Miyasato S.R."/>
            <person name="Simison M."/>
            <person name="Cherry J.M."/>
        </authorList>
    </citation>
    <scope>GENOME REANNOTATION</scope>
    <source>
        <strain>ATCC 204508 / S288c</strain>
    </source>
</reference>
<reference key="3">
    <citation type="journal article" date="2003" name="Yeast">
        <title>Genome-wide identification of fungal GPI proteins.</title>
        <authorList>
            <person name="De Groot P.W."/>
            <person name="Hellingwerf K.J."/>
            <person name="Klis F.M."/>
        </authorList>
    </citation>
    <scope>PREDICTION OF GPI-ANCHOR</scope>
</reference>
<dbReference type="EMBL" id="U00029">
    <property type="protein sequence ID" value="AAB69739.1"/>
    <property type="molecule type" value="Genomic_DNA"/>
</dbReference>
<dbReference type="EMBL" id="BK006934">
    <property type="protein sequence ID" value="DAA06909.1"/>
    <property type="molecule type" value="Genomic_DNA"/>
</dbReference>
<dbReference type="PIR" id="S48995">
    <property type="entry name" value="S48995"/>
</dbReference>
<dbReference type="RefSeq" id="NP_009430.1">
    <property type="nucleotide sequence ID" value="NM_001180045.1"/>
</dbReference>
<dbReference type="RefSeq" id="NP_012084.3">
    <property type="nucleotide sequence ID" value="NM_001179345.3"/>
</dbReference>
<dbReference type="SMR" id="P0CX19"/>
<dbReference type="BioGRID" id="31817">
    <property type="interactions" value="56"/>
</dbReference>
<dbReference type="BioGRID" id="36647">
    <property type="interactions" value="1"/>
</dbReference>
<dbReference type="FunCoup" id="P0CX19">
    <property type="interactions" value="61"/>
</dbReference>
<dbReference type="GlyGen" id="P0CX19">
    <property type="glycosylation" value="2 sites"/>
</dbReference>
<dbReference type="EnsemblFungi" id="YAR066W_mRNA">
    <property type="protein sequence ID" value="YAR066W"/>
    <property type="gene ID" value="YAR066W"/>
</dbReference>
<dbReference type="EnsemblFungi" id="YHR214W_mRNA">
    <property type="protein sequence ID" value="YHR214W"/>
    <property type="gene ID" value="YHR214W"/>
</dbReference>
<dbReference type="GeneID" id="856621"/>
<dbReference type="KEGG" id="sce:YAR066W"/>
<dbReference type="KEGG" id="sce:YHR214W"/>
<dbReference type="AGR" id="SGD:S000001257"/>
<dbReference type="SGD" id="S000001257">
    <property type="gene designation" value="YHR214W"/>
</dbReference>
<dbReference type="VEuPathDB" id="FungiDB:YAR066W"/>
<dbReference type="VEuPathDB" id="FungiDB:YHR214W"/>
<dbReference type="GeneTree" id="ENSGT00940000179085"/>
<dbReference type="HOGENOM" id="CLU_077759_1_0_1"/>
<dbReference type="InParanoid" id="P0CX19"/>
<dbReference type="OMA" id="QSXSSXS"/>
<dbReference type="OrthoDB" id="4067907at2759"/>
<dbReference type="BioCyc" id="YEAST:G3O-31238-MONOMER"/>
<dbReference type="PRO" id="PR:P0CX19"/>
<dbReference type="Proteomes" id="UP000002311">
    <property type="component" value="Chromosome VIII"/>
</dbReference>
<dbReference type="RNAct" id="P0CX19">
    <property type="molecule type" value="protein"/>
</dbReference>
<dbReference type="ExpressionAtlas" id="P0CX19">
    <property type="expression patterns" value="baseline and differential"/>
</dbReference>
<dbReference type="GO" id="GO:0005886">
    <property type="term" value="C:plasma membrane"/>
    <property type="evidence" value="ECO:0007669"/>
    <property type="project" value="UniProtKB-SubCell"/>
</dbReference>
<dbReference type="GO" id="GO:0098552">
    <property type="term" value="C:side of membrane"/>
    <property type="evidence" value="ECO:0007669"/>
    <property type="project" value="UniProtKB-KW"/>
</dbReference>
<keyword id="KW-1003">Cell membrane</keyword>
<keyword id="KW-0325">Glycoprotein</keyword>
<keyword id="KW-0336">GPI-anchor</keyword>
<keyword id="KW-0449">Lipoprotein</keyword>
<keyword id="KW-0472">Membrane</keyword>
<keyword id="KW-1185">Reference proteome</keyword>
<keyword id="KW-0732">Signal</keyword>
<accession>P0CX19</accession>
<accession>D3DLG5</accession>
<accession>P38897</accession>
<accession>Q7LII8</accession>
<protein>
    <recommendedName>
        <fullName>Putative GPI-anchored protein YHR214W</fullName>
    </recommendedName>
</protein>
<feature type="signal peptide" evidence="1">
    <location>
        <begin position="1"/>
        <end position="23"/>
    </location>
</feature>
<feature type="chain" id="PRO_0000409754" description="Putative GPI-anchored protein YHR214W">
    <location>
        <begin position="24"/>
        <end position="184"/>
    </location>
</feature>
<feature type="propeptide" id="PRO_0000409755" description="Removed in mature form" evidence="1">
    <location>
        <begin position="185"/>
        <end position="203"/>
    </location>
</feature>
<feature type="lipid moiety-binding region" description="GPI-anchor amidated asparagine" evidence="1">
    <location>
        <position position="184"/>
    </location>
</feature>
<feature type="glycosylation site" description="N-linked (GlcNAc...) asparagine" evidence="1">
    <location>
        <position position="28"/>
    </location>
</feature>
<feature type="glycosylation site" description="N-linked (GlcNAc...) asparagine" evidence="1">
    <location>
        <position position="138"/>
    </location>
</feature>